<feature type="chain" id="PRO_1000141794" description="DNA-directed RNA polymerase subunit beta'">
    <location>
        <begin position="1"/>
        <end position="1225"/>
    </location>
</feature>
<feature type="binding site" evidence="1">
    <location>
        <position position="60"/>
    </location>
    <ligand>
        <name>Zn(2+)</name>
        <dbReference type="ChEBI" id="CHEBI:29105"/>
        <label>1</label>
    </ligand>
</feature>
<feature type="binding site" evidence="1">
    <location>
        <position position="62"/>
    </location>
    <ligand>
        <name>Zn(2+)</name>
        <dbReference type="ChEBI" id="CHEBI:29105"/>
        <label>1</label>
    </ligand>
</feature>
<feature type="binding site" evidence="1">
    <location>
        <position position="75"/>
    </location>
    <ligand>
        <name>Zn(2+)</name>
        <dbReference type="ChEBI" id="CHEBI:29105"/>
        <label>1</label>
    </ligand>
</feature>
<feature type="binding site" evidence="1">
    <location>
        <position position="78"/>
    </location>
    <ligand>
        <name>Zn(2+)</name>
        <dbReference type="ChEBI" id="CHEBI:29105"/>
        <label>1</label>
    </ligand>
</feature>
<feature type="binding site" evidence="1">
    <location>
        <position position="450"/>
    </location>
    <ligand>
        <name>Mg(2+)</name>
        <dbReference type="ChEBI" id="CHEBI:18420"/>
    </ligand>
</feature>
<feature type="binding site" evidence="1">
    <location>
        <position position="452"/>
    </location>
    <ligand>
        <name>Mg(2+)</name>
        <dbReference type="ChEBI" id="CHEBI:18420"/>
    </ligand>
</feature>
<feature type="binding site" evidence="1">
    <location>
        <position position="454"/>
    </location>
    <ligand>
        <name>Mg(2+)</name>
        <dbReference type="ChEBI" id="CHEBI:18420"/>
    </ligand>
</feature>
<feature type="binding site" evidence="1">
    <location>
        <position position="818"/>
    </location>
    <ligand>
        <name>Zn(2+)</name>
        <dbReference type="ChEBI" id="CHEBI:29105"/>
        <label>2</label>
    </ligand>
</feature>
<feature type="binding site" evidence="1">
    <location>
        <position position="892"/>
    </location>
    <ligand>
        <name>Zn(2+)</name>
        <dbReference type="ChEBI" id="CHEBI:29105"/>
        <label>2</label>
    </ligand>
</feature>
<feature type="binding site" evidence="1">
    <location>
        <position position="899"/>
    </location>
    <ligand>
        <name>Zn(2+)</name>
        <dbReference type="ChEBI" id="CHEBI:29105"/>
        <label>2</label>
    </ligand>
</feature>
<feature type="binding site" evidence="1">
    <location>
        <position position="902"/>
    </location>
    <ligand>
        <name>Zn(2+)</name>
        <dbReference type="ChEBI" id="CHEBI:29105"/>
        <label>2</label>
    </ligand>
</feature>
<name>RPOC_STRP4</name>
<proteinExistence type="inferred from homology"/>
<reference key="1">
    <citation type="journal article" date="2001" name="Microb. Drug Resist.">
        <title>Annotated draft genomic sequence from a Streptococcus pneumoniae type 19F clinical isolate.</title>
        <authorList>
            <person name="Dopazo J."/>
            <person name="Mendoza A."/>
            <person name="Herrero J."/>
            <person name="Caldara F."/>
            <person name="Humbert Y."/>
            <person name="Friedli L."/>
            <person name="Guerrier M."/>
            <person name="Grand-Schenk E."/>
            <person name="Gandin C."/>
            <person name="de Francesco M."/>
            <person name="Polissi A."/>
            <person name="Buell G."/>
            <person name="Feger G."/>
            <person name="Garcia E."/>
            <person name="Peitsch M."/>
            <person name="Garcia-Bustos J.F."/>
        </authorList>
    </citation>
    <scope>NUCLEOTIDE SEQUENCE [LARGE SCALE GENOMIC DNA]</scope>
    <source>
        <strain>G54</strain>
    </source>
</reference>
<reference key="2">
    <citation type="submission" date="2008-03" db="EMBL/GenBank/DDBJ databases">
        <title>Pneumococcal beta glucoside metabolism investigated by whole genome comparison.</title>
        <authorList>
            <person name="Mulas L."/>
            <person name="Trappetti C."/>
            <person name="Hakenbeck R."/>
            <person name="Iannelli F."/>
            <person name="Pozzi G."/>
            <person name="Davidsen T.M."/>
            <person name="Tettelin H."/>
            <person name="Oggioni M."/>
        </authorList>
    </citation>
    <scope>NUCLEOTIDE SEQUENCE [LARGE SCALE GENOMIC DNA]</scope>
    <source>
        <strain>G54</strain>
    </source>
</reference>
<dbReference type="EC" id="2.7.7.6" evidence="1"/>
<dbReference type="EMBL" id="CP001015">
    <property type="protein sequence ID" value="ACF56596.1"/>
    <property type="molecule type" value="Genomic_DNA"/>
</dbReference>
<dbReference type="SMR" id="B5E2F2"/>
<dbReference type="KEGG" id="spx:SPG_1861"/>
<dbReference type="HOGENOM" id="CLU_000524_3_1_9"/>
<dbReference type="GO" id="GO:0000428">
    <property type="term" value="C:DNA-directed RNA polymerase complex"/>
    <property type="evidence" value="ECO:0007669"/>
    <property type="project" value="UniProtKB-KW"/>
</dbReference>
<dbReference type="GO" id="GO:0003677">
    <property type="term" value="F:DNA binding"/>
    <property type="evidence" value="ECO:0007669"/>
    <property type="project" value="UniProtKB-UniRule"/>
</dbReference>
<dbReference type="GO" id="GO:0003899">
    <property type="term" value="F:DNA-directed RNA polymerase activity"/>
    <property type="evidence" value="ECO:0007669"/>
    <property type="project" value="UniProtKB-UniRule"/>
</dbReference>
<dbReference type="GO" id="GO:0000287">
    <property type="term" value="F:magnesium ion binding"/>
    <property type="evidence" value="ECO:0007669"/>
    <property type="project" value="UniProtKB-UniRule"/>
</dbReference>
<dbReference type="GO" id="GO:0008270">
    <property type="term" value="F:zinc ion binding"/>
    <property type="evidence" value="ECO:0007669"/>
    <property type="project" value="UniProtKB-UniRule"/>
</dbReference>
<dbReference type="GO" id="GO:0006351">
    <property type="term" value="P:DNA-templated transcription"/>
    <property type="evidence" value="ECO:0007669"/>
    <property type="project" value="UniProtKB-UniRule"/>
</dbReference>
<dbReference type="CDD" id="cd02655">
    <property type="entry name" value="RNAP_beta'_C"/>
    <property type="match status" value="1"/>
</dbReference>
<dbReference type="CDD" id="cd01609">
    <property type="entry name" value="RNAP_beta'_N"/>
    <property type="match status" value="1"/>
</dbReference>
<dbReference type="FunFam" id="1.10.150.390:FF:000002">
    <property type="entry name" value="DNA-directed RNA polymerase subunit beta"/>
    <property type="match status" value="1"/>
</dbReference>
<dbReference type="FunFam" id="4.10.860.120:FF:000001">
    <property type="entry name" value="DNA-directed RNA polymerase subunit beta"/>
    <property type="match status" value="1"/>
</dbReference>
<dbReference type="Gene3D" id="1.10.132.30">
    <property type="match status" value="1"/>
</dbReference>
<dbReference type="Gene3D" id="1.10.150.390">
    <property type="match status" value="1"/>
</dbReference>
<dbReference type="Gene3D" id="1.10.1790.20">
    <property type="match status" value="1"/>
</dbReference>
<dbReference type="Gene3D" id="1.10.40.90">
    <property type="match status" value="1"/>
</dbReference>
<dbReference type="Gene3D" id="2.40.40.20">
    <property type="match status" value="1"/>
</dbReference>
<dbReference type="Gene3D" id="2.40.50.100">
    <property type="match status" value="1"/>
</dbReference>
<dbReference type="Gene3D" id="4.10.860.120">
    <property type="entry name" value="RNA polymerase II, clamp domain"/>
    <property type="match status" value="1"/>
</dbReference>
<dbReference type="Gene3D" id="1.10.274.100">
    <property type="entry name" value="RNA polymerase Rpb1, domain 3"/>
    <property type="match status" value="1"/>
</dbReference>
<dbReference type="HAMAP" id="MF_01322">
    <property type="entry name" value="RNApol_bact_RpoC"/>
    <property type="match status" value="1"/>
</dbReference>
<dbReference type="InterPro" id="IPR045867">
    <property type="entry name" value="DNA-dir_RpoC_beta_prime"/>
</dbReference>
<dbReference type="InterPro" id="IPR012754">
    <property type="entry name" value="DNA-dir_RpoC_beta_prime_bact"/>
</dbReference>
<dbReference type="InterPro" id="IPR000722">
    <property type="entry name" value="RNA_pol_asu"/>
</dbReference>
<dbReference type="InterPro" id="IPR006592">
    <property type="entry name" value="RNA_pol_N"/>
</dbReference>
<dbReference type="InterPro" id="IPR007080">
    <property type="entry name" value="RNA_pol_Rpb1_1"/>
</dbReference>
<dbReference type="InterPro" id="IPR007066">
    <property type="entry name" value="RNA_pol_Rpb1_3"/>
</dbReference>
<dbReference type="InterPro" id="IPR042102">
    <property type="entry name" value="RNA_pol_Rpb1_3_sf"/>
</dbReference>
<dbReference type="InterPro" id="IPR007083">
    <property type="entry name" value="RNA_pol_Rpb1_4"/>
</dbReference>
<dbReference type="InterPro" id="IPR007081">
    <property type="entry name" value="RNA_pol_Rpb1_5"/>
</dbReference>
<dbReference type="InterPro" id="IPR044893">
    <property type="entry name" value="RNA_pol_Rpb1_clamp_domain"/>
</dbReference>
<dbReference type="InterPro" id="IPR038120">
    <property type="entry name" value="Rpb1_funnel_sf"/>
</dbReference>
<dbReference type="NCBIfam" id="TIGR02386">
    <property type="entry name" value="rpoC_TIGR"/>
    <property type="match status" value="1"/>
</dbReference>
<dbReference type="PANTHER" id="PTHR19376">
    <property type="entry name" value="DNA-DIRECTED RNA POLYMERASE"/>
    <property type="match status" value="1"/>
</dbReference>
<dbReference type="PANTHER" id="PTHR19376:SF54">
    <property type="entry name" value="DNA-DIRECTED RNA POLYMERASE SUBUNIT BETA"/>
    <property type="match status" value="1"/>
</dbReference>
<dbReference type="Pfam" id="PF04997">
    <property type="entry name" value="RNA_pol_Rpb1_1"/>
    <property type="match status" value="1"/>
</dbReference>
<dbReference type="Pfam" id="PF00623">
    <property type="entry name" value="RNA_pol_Rpb1_2"/>
    <property type="match status" value="2"/>
</dbReference>
<dbReference type="Pfam" id="PF04983">
    <property type="entry name" value="RNA_pol_Rpb1_3"/>
    <property type="match status" value="1"/>
</dbReference>
<dbReference type="Pfam" id="PF05000">
    <property type="entry name" value="RNA_pol_Rpb1_4"/>
    <property type="match status" value="1"/>
</dbReference>
<dbReference type="Pfam" id="PF04998">
    <property type="entry name" value="RNA_pol_Rpb1_5"/>
    <property type="match status" value="1"/>
</dbReference>
<dbReference type="SMART" id="SM00663">
    <property type="entry name" value="RPOLA_N"/>
    <property type="match status" value="1"/>
</dbReference>
<dbReference type="SUPFAM" id="SSF64484">
    <property type="entry name" value="beta and beta-prime subunits of DNA dependent RNA-polymerase"/>
    <property type="match status" value="1"/>
</dbReference>
<evidence type="ECO:0000255" key="1">
    <source>
        <dbReference type="HAMAP-Rule" id="MF_01322"/>
    </source>
</evidence>
<keyword id="KW-0240">DNA-directed RNA polymerase</keyword>
<keyword id="KW-0460">Magnesium</keyword>
<keyword id="KW-0479">Metal-binding</keyword>
<keyword id="KW-0548">Nucleotidyltransferase</keyword>
<keyword id="KW-0804">Transcription</keyword>
<keyword id="KW-0808">Transferase</keyword>
<keyword id="KW-0862">Zinc</keyword>
<protein>
    <recommendedName>
        <fullName evidence="1">DNA-directed RNA polymerase subunit beta'</fullName>
        <shortName evidence="1">RNAP subunit beta'</shortName>
        <ecNumber evidence="1">2.7.7.6</ecNumber>
    </recommendedName>
    <alternativeName>
        <fullName evidence="1">RNA polymerase subunit beta'</fullName>
    </alternativeName>
    <alternativeName>
        <fullName evidence="1">Transcriptase subunit beta'</fullName>
    </alternativeName>
</protein>
<sequence>MVDVNRFKSMQITLASPSKVRSWSYGEVKKPETINYRTLKPEREGLFDEVIFGPTKDWECACGKYKRIRYRGIVCDRCGVEVTRTKVRRERMGHIELKAPVSHIWYFKGIPSRMGLTLDMSPRALEEVIYFAAYVVIDPKDTPLEHKSIMTEREYRERLREYGYGSFVAKMGAEAIQDLLKQVDLEKEIAELKEELKTATGQKRVKAIRRLDVLDAFYKSGNKPEWMILNILPVIPPDLRPMLQLDGGRFASSDLNDLYRRVINRNNRLARLLELNAPGIIVQNEKRMLQEAVDALIDNGRRGRPITGPGSRPLKSLSHMLKGKQGRFRQNLLGKRVDFSGRSVIAVGPTLKMYQCGVPREMAIELFKPFVMREIVARDIVQNVKAAKRLVERGDERIWDILEEVIKEHPVLLNRAPTLHRLGIQAFEPVLIDGKALRLHPLVCEAYNADFDGDQMAIHVPLSEEAQAEARILMLAAEHILNPKDGKPVVTPSQDMVLGNYYLTMEEAGREGEGMVFKDRDEAVMAYRNGYVHLHSRVGIATDSLNKPWTEEQRHKVLLTTVGKILFNDIMPEGLPYLQEPNNANLTEGVPAKYFLPLGGDIKEAISNLELNPPFKKKNLGNIIAEIFKRFRTTETSALLDRMKNLGYHHSTLAGLTVGIADIPVVDDKTEIIEESHKRVEQITKQFRRGMITDDERYNAVTAEWRAAREKLEKRLIANQDPKNPIVMMMDSGARGNISNFSQLAGMRGLMAAPNGRIMELPILSNFREGLSVLEMFFSTHGARKGMTDTALKTADSGYLTRRLVDVAQDVIIREDDCGTDRGLLIRSIAEGKEMIESLEERLNGRYTKKTVKHPETGAVIIGPNELITEDKAREIVNAGVEEVTIRSVFTCNTRHGVCRHCYGINLATGDAVEVGEAVGTIAAQSIGEPGTQLTMRTFHTGGVASNTDITQGLPRVQEIFEARNPKGEAVITEVKGQVTAIEEDASTRTKKVFVKGETGEGEYVVPFTARMRVEVGGQVARGAALTEGSIQPKRLLAVRDVLSVETYLLGEVQKVYRSQGVEIGDKHIEVMVRQMIRKVRVMDPGDTDLLMGTLMDINDFTDANKDVLIAGGVPATGRPVLMGITKASLETNSFLSAASFQETTRVLTDAAIRGKKDHLLGLKENVIIGKIIPAGTGMARYRNLEPHAVNEEEYLNPTVEEEGNEETTEVVVDTAVETVEETVE</sequence>
<organism>
    <name type="scientific">Streptococcus pneumoniae serotype 19F (strain G54)</name>
    <dbReference type="NCBI Taxonomy" id="512566"/>
    <lineage>
        <taxon>Bacteria</taxon>
        <taxon>Bacillati</taxon>
        <taxon>Bacillota</taxon>
        <taxon>Bacilli</taxon>
        <taxon>Lactobacillales</taxon>
        <taxon>Streptococcaceae</taxon>
        <taxon>Streptococcus</taxon>
    </lineage>
</organism>
<comment type="function">
    <text evidence="1">DNA-dependent RNA polymerase catalyzes the transcription of DNA into RNA using the four ribonucleoside triphosphates as substrates.</text>
</comment>
<comment type="catalytic activity">
    <reaction evidence="1">
        <text>RNA(n) + a ribonucleoside 5'-triphosphate = RNA(n+1) + diphosphate</text>
        <dbReference type="Rhea" id="RHEA:21248"/>
        <dbReference type="Rhea" id="RHEA-COMP:14527"/>
        <dbReference type="Rhea" id="RHEA-COMP:17342"/>
        <dbReference type="ChEBI" id="CHEBI:33019"/>
        <dbReference type="ChEBI" id="CHEBI:61557"/>
        <dbReference type="ChEBI" id="CHEBI:140395"/>
        <dbReference type="EC" id="2.7.7.6"/>
    </reaction>
</comment>
<comment type="cofactor">
    <cofactor evidence="1">
        <name>Mg(2+)</name>
        <dbReference type="ChEBI" id="CHEBI:18420"/>
    </cofactor>
    <text evidence="1">Binds 1 Mg(2+) ion per subunit.</text>
</comment>
<comment type="cofactor">
    <cofactor evidence="1">
        <name>Zn(2+)</name>
        <dbReference type="ChEBI" id="CHEBI:29105"/>
    </cofactor>
    <text evidence="1">Binds 2 Zn(2+) ions per subunit.</text>
</comment>
<comment type="subunit">
    <text evidence="1">The RNAP catalytic core consists of 2 alpha, 1 beta, 1 beta' and 1 omega subunit. When a sigma factor is associated with the core the holoenzyme is formed, which can initiate transcription.</text>
</comment>
<comment type="similarity">
    <text evidence="1">Belongs to the RNA polymerase beta' chain family.</text>
</comment>
<gene>
    <name evidence="1" type="primary">rpoC</name>
    <name type="ordered locus">SPG_1861</name>
</gene>
<accession>B5E2F2</accession>